<proteinExistence type="inferred from homology"/>
<dbReference type="EMBL" id="AL935263">
    <property type="protein sequence ID" value="CCC79441.1"/>
    <property type="molecule type" value="Genomic_DNA"/>
</dbReference>
<dbReference type="RefSeq" id="YP_004889955.1">
    <property type="nucleotide sequence ID" value="NC_004567.2"/>
</dbReference>
<dbReference type="SMR" id="Q88V55"/>
<dbReference type="STRING" id="220668.lp_2228"/>
<dbReference type="EnsemblBacteria" id="CCC79441">
    <property type="protein sequence ID" value="CCC79441"/>
    <property type="gene ID" value="lp_2228"/>
</dbReference>
<dbReference type="KEGG" id="lpl:lp_2228"/>
<dbReference type="PATRIC" id="fig|220668.9.peg.1883"/>
<dbReference type="eggNOG" id="COG1393">
    <property type="taxonomic scope" value="Bacteria"/>
</dbReference>
<dbReference type="HOGENOM" id="CLU_116644_1_1_9"/>
<dbReference type="OrthoDB" id="9794155at2"/>
<dbReference type="PhylomeDB" id="Q88V55"/>
<dbReference type="Proteomes" id="UP000000432">
    <property type="component" value="Chromosome"/>
</dbReference>
<dbReference type="GO" id="GO:0005737">
    <property type="term" value="C:cytoplasm"/>
    <property type="evidence" value="ECO:0007669"/>
    <property type="project" value="UniProtKB-SubCell"/>
</dbReference>
<dbReference type="GO" id="GO:0045892">
    <property type="term" value="P:negative regulation of DNA-templated transcription"/>
    <property type="evidence" value="ECO:0007669"/>
    <property type="project" value="InterPro"/>
</dbReference>
<dbReference type="CDD" id="cd03032">
    <property type="entry name" value="ArsC_Spx"/>
    <property type="match status" value="1"/>
</dbReference>
<dbReference type="Gene3D" id="3.40.30.10">
    <property type="entry name" value="Glutaredoxin"/>
    <property type="match status" value="1"/>
</dbReference>
<dbReference type="HAMAP" id="MF_01132">
    <property type="entry name" value="Spx"/>
    <property type="match status" value="1"/>
</dbReference>
<dbReference type="InterPro" id="IPR006660">
    <property type="entry name" value="Arsenate_reductase-like"/>
</dbReference>
<dbReference type="InterPro" id="IPR023731">
    <property type="entry name" value="Spx"/>
</dbReference>
<dbReference type="InterPro" id="IPR036249">
    <property type="entry name" value="Thioredoxin-like_sf"/>
</dbReference>
<dbReference type="InterPro" id="IPR006504">
    <property type="entry name" value="Tscrpt_reg_Spx/MgsR"/>
</dbReference>
<dbReference type="NCBIfam" id="TIGR01617">
    <property type="entry name" value="arsC_related"/>
    <property type="match status" value="1"/>
</dbReference>
<dbReference type="NCBIfam" id="NF002459">
    <property type="entry name" value="PRK01655.1"/>
    <property type="match status" value="1"/>
</dbReference>
<dbReference type="NCBIfam" id="NF009210">
    <property type="entry name" value="PRK12559.1"/>
    <property type="match status" value="1"/>
</dbReference>
<dbReference type="PANTHER" id="PTHR30041">
    <property type="entry name" value="ARSENATE REDUCTASE"/>
    <property type="match status" value="1"/>
</dbReference>
<dbReference type="PANTHER" id="PTHR30041:SF7">
    <property type="entry name" value="GLOBAL TRANSCRIPTIONAL REGULATOR SPX"/>
    <property type="match status" value="1"/>
</dbReference>
<dbReference type="Pfam" id="PF03960">
    <property type="entry name" value="ArsC"/>
    <property type="match status" value="1"/>
</dbReference>
<dbReference type="SUPFAM" id="SSF52833">
    <property type="entry name" value="Thioredoxin-like"/>
    <property type="match status" value="1"/>
</dbReference>
<dbReference type="PROSITE" id="PS51353">
    <property type="entry name" value="ARSC"/>
    <property type="match status" value="1"/>
</dbReference>
<name>SPX_LACPL</name>
<reference key="1">
    <citation type="journal article" date="2003" name="Proc. Natl. Acad. Sci. U.S.A.">
        <title>Complete genome sequence of Lactobacillus plantarum WCFS1.</title>
        <authorList>
            <person name="Kleerebezem M."/>
            <person name="Boekhorst J."/>
            <person name="van Kranenburg R."/>
            <person name="Molenaar D."/>
            <person name="Kuipers O.P."/>
            <person name="Leer R."/>
            <person name="Tarchini R."/>
            <person name="Peters S.A."/>
            <person name="Sandbrink H.M."/>
            <person name="Fiers M.W.E.J."/>
            <person name="Stiekema W."/>
            <person name="Klein Lankhorst R.M."/>
            <person name="Bron P.A."/>
            <person name="Hoffer S.M."/>
            <person name="Nierop Groot M.N."/>
            <person name="Kerkhoven R."/>
            <person name="De Vries M."/>
            <person name="Ursing B."/>
            <person name="De Vos W.M."/>
            <person name="Siezen R.J."/>
        </authorList>
    </citation>
    <scope>NUCLEOTIDE SEQUENCE [LARGE SCALE GENOMIC DNA]</scope>
    <source>
        <strain>ATCC BAA-793 / NCIMB 8826 / WCFS1</strain>
    </source>
</reference>
<reference key="2">
    <citation type="journal article" date="2012" name="J. Bacteriol.">
        <title>Complete resequencing and reannotation of the Lactobacillus plantarum WCFS1 genome.</title>
        <authorList>
            <person name="Siezen R.J."/>
            <person name="Francke C."/>
            <person name="Renckens B."/>
            <person name="Boekhorst J."/>
            <person name="Wels M."/>
            <person name="Kleerebezem M."/>
            <person name="van Hijum S.A."/>
        </authorList>
    </citation>
    <scope>NUCLEOTIDE SEQUENCE [LARGE SCALE GENOMIC DNA]</scope>
    <scope>GENOME REANNOTATION</scope>
    <source>
        <strain>ATCC BAA-793 / NCIMB 8826 / WCFS1</strain>
    </source>
</reference>
<feature type="chain" id="PRO_0000162556" description="Global transcriptional regulator Spx">
    <location>
        <begin position="1"/>
        <end position="132"/>
    </location>
</feature>
<feature type="disulfide bond" description="Redox-active" evidence="1">
    <location>
        <begin position="10"/>
        <end position="13"/>
    </location>
</feature>
<keyword id="KW-0963">Cytoplasm</keyword>
<keyword id="KW-1015">Disulfide bond</keyword>
<keyword id="KW-0676">Redox-active center</keyword>
<keyword id="KW-1185">Reference proteome</keyword>
<keyword id="KW-0804">Transcription</keyword>
<keyword id="KW-0805">Transcription regulation</keyword>
<comment type="function">
    <text evidence="1">Global transcriptional regulator that plays a key role in stress response and exerts either positive or negative regulation of genes. Acts by interacting with the C-terminal domain of the alpha subunit of the RNA polymerase (RNAP). This interaction can enhance binding of RNAP to the promoter region of target genes and stimulate their transcription, or block interaction of RNAP with activator.</text>
</comment>
<comment type="subunit">
    <text evidence="1">Interacts with the C-terminal domain of the alpha subunit of the RNAP.</text>
</comment>
<comment type="subcellular location">
    <subcellularLocation>
        <location evidence="1">Cytoplasm</location>
    </subcellularLocation>
</comment>
<comment type="similarity">
    <text evidence="1">Belongs to the ArsC family. Spx subfamily.</text>
</comment>
<organism>
    <name type="scientific">Lactiplantibacillus plantarum (strain ATCC BAA-793 / NCIMB 8826 / WCFS1)</name>
    <name type="common">Lactobacillus plantarum</name>
    <dbReference type="NCBI Taxonomy" id="220668"/>
    <lineage>
        <taxon>Bacteria</taxon>
        <taxon>Bacillati</taxon>
        <taxon>Bacillota</taxon>
        <taxon>Bacilli</taxon>
        <taxon>Lactobacillales</taxon>
        <taxon>Lactobacillaceae</taxon>
        <taxon>Lactiplantibacillus</taxon>
    </lineage>
</organism>
<protein>
    <recommendedName>
        <fullName evidence="1">Global transcriptional regulator Spx</fullName>
    </recommendedName>
</protein>
<evidence type="ECO:0000255" key="1">
    <source>
        <dbReference type="HAMAP-Rule" id="MF_01132"/>
    </source>
</evidence>
<gene>
    <name evidence="1" type="primary">spx</name>
    <name type="ordered locus">lp_2228</name>
</gene>
<accession>Q88V55</accession>
<accession>F9UQF2</accession>
<sequence length="132" mass="15485">MVILYTAPSCTSCRKAKAWLQTHDIDFQEHNLFTEPLSIEKIKQILQLTESGTEEIISTRSKAFQQLNVDINDLSLNELFDMITHDPSLLRRPIMLDEKRLQVGYNEDEIRRFLPRKIRTLELLRAQQLANM</sequence>